<keyword id="KW-1003">Cell membrane</keyword>
<keyword id="KW-0217">Developmental protein</keyword>
<keyword id="KW-1015">Disulfide bond</keyword>
<keyword id="KW-0297">G-protein coupled receptor</keyword>
<keyword id="KW-0325">Glycoprotein</keyword>
<keyword id="KW-0472">Membrane</keyword>
<keyword id="KW-0524">Neurogenesis</keyword>
<keyword id="KW-0675">Receptor</keyword>
<keyword id="KW-1185">Reference proteome</keyword>
<keyword id="KW-0732">Signal</keyword>
<keyword id="KW-0807">Transducer</keyword>
<keyword id="KW-0812">Transmembrane</keyword>
<keyword id="KW-1133">Transmembrane helix</keyword>
<keyword id="KW-0879">Wnt signaling pathway</keyword>
<reference evidence="16" key="1">
    <citation type="journal article" date="1998" name="Science">
        <title>Genome sequence of the nematode C. elegans: a platform for investigating biology.</title>
        <authorList>
            <consortium name="The C. elegans sequencing consortium"/>
        </authorList>
    </citation>
    <scope>NUCLEOTIDE SEQUENCE [LARGE SCALE GENOMIC DNA]</scope>
    <source>
        <strain evidence="16">Bristol N2</strain>
    </source>
</reference>
<reference evidence="14" key="2">
    <citation type="submission" date="2005-08" db="EMBL/GenBank/DDBJ databases">
        <title>The Caenorhabditis elegans transcriptome project, a complementary view of the genome.</title>
        <authorList>
            <person name="Kohara Y."/>
            <person name="Shin-i T."/>
            <person name="Suzuki Y."/>
            <person name="Sugano S."/>
            <person name="Thierry-Mieg D."/>
            <person name="Thierry-Mieg J."/>
        </authorList>
    </citation>
    <scope>NUCLEOTIDE SEQUENCE [LARGE SCALE MRNA]</scope>
</reference>
<reference evidence="15" key="3">
    <citation type="journal article" date="1999" name="Development">
        <title>Dfrizzled-3, a new Drosophila Wnt receptor, acting as an attenuator of Wingless signaling in wingless hypomorphic mutants.</title>
        <authorList>
            <person name="Sato A."/>
            <person name="Kojima T."/>
            <person name="Ui-Tei K."/>
            <person name="Miyata Y."/>
            <person name="Saigo K."/>
        </authorList>
    </citation>
    <scope>NUCLEOTIDE SEQUENCE [GENOMIC DNA] OF 1-534</scope>
</reference>
<reference evidence="13" key="4">
    <citation type="journal article" date="2005" name="Dev. Biol.">
        <title>The C. elegans Frizzled CFZ-2 is required for cell migration and interacts with multiple Wnt signaling pathways.</title>
        <authorList>
            <person name="Zinovyeva A.Y."/>
            <person name="Forrester W.C."/>
        </authorList>
    </citation>
    <scope>FUNCTION</scope>
    <scope>TISSUE SPECIFICITY</scope>
    <scope>DEVELOPMENTAL STAGE</scope>
    <scope>DISRUPTION PHENOTYPE</scope>
</reference>
<reference evidence="13" key="5">
    <citation type="journal article" date="2009" name="Development">
        <title>Wnt-Ror signaling to SIA and SIB neurons directs anterior axon guidance and nerve ring placement in C. elegans.</title>
        <authorList>
            <person name="Kennerdell J.R."/>
            <person name="Fetter R.D."/>
            <person name="Bargmann C.I."/>
        </authorList>
    </citation>
    <scope>FUNCTION</scope>
    <scope>DISRUPTION PHENOTYPE</scope>
</reference>
<reference evidence="13" key="6">
    <citation type="journal article" date="2010" name="PLoS Genet.">
        <title>A Wnt-Frz/Ror-Dsh pathway regulates neurite outgrowth in Caenorhabditis elegans.</title>
        <authorList>
            <person name="Song S."/>
            <person name="Zhang B."/>
            <person name="Sun H."/>
            <person name="Li X."/>
            <person name="Xiang Y."/>
            <person name="Liu Z."/>
            <person name="Huang X."/>
            <person name="Ding M."/>
        </authorList>
    </citation>
    <scope>FUNCTION</scope>
    <scope>DISRUPTION PHENOTYPE</scope>
</reference>
<dbReference type="EMBL" id="DQ178242">
    <property type="protein sequence ID" value="ABA18181.1"/>
    <property type="molecule type" value="mRNA"/>
</dbReference>
<dbReference type="EMBL" id="BX284605">
    <property type="protein sequence ID" value="CCD62501.1"/>
    <property type="molecule type" value="Genomic_DNA"/>
</dbReference>
<dbReference type="EMBL" id="AB026113">
    <property type="protein sequence ID" value="BAA84678.1"/>
    <property type="status" value="ALT_SEQ"/>
    <property type="molecule type" value="Genomic_DNA"/>
</dbReference>
<dbReference type="PIR" id="T37325">
    <property type="entry name" value="T37325"/>
</dbReference>
<dbReference type="RefSeq" id="NP_503965.2">
    <property type="nucleotide sequence ID" value="NM_071564.8"/>
</dbReference>
<dbReference type="SMR" id="G5ECQ2"/>
<dbReference type="FunCoup" id="G5ECQ2">
    <property type="interactions" value="460"/>
</dbReference>
<dbReference type="IntAct" id="G5ECQ2">
    <property type="interactions" value="11"/>
</dbReference>
<dbReference type="STRING" id="6239.F27E11.3.1"/>
<dbReference type="GlyCosmos" id="G5ECQ2">
    <property type="glycosylation" value="2 sites, No reported glycans"/>
</dbReference>
<dbReference type="PaxDb" id="6239-F27E11.3a"/>
<dbReference type="PeptideAtlas" id="G5ECQ2"/>
<dbReference type="EnsemblMetazoa" id="F27E11.3.1">
    <property type="protein sequence ID" value="F27E11.3.1"/>
    <property type="gene ID" value="WBGene00000478"/>
</dbReference>
<dbReference type="GeneID" id="178768"/>
<dbReference type="KEGG" id="cel:CELE_F27E11.3"/>
<dbReference type="AGR" id="WB:WBGene00000478"/>
<dbReference type="CTD" id="178768"/>
<dbReference type="WormBase" id="F27E11.3">
    <property type="protein sequence ID" value="CE39149"/>
    <property type="gene ID" value="WBGene00000478"/>
    <property type="gene designation" value="cfz-2"/>
</dbReference>
<dbReference type="eggNOG" id="KOG3577">
    <property type="taxonomic scope" value="Eukaryota"/>
</dbReference>
<dbReference type="GeneTree" id="ENSGT00940000166857"/>
<dbReference type="InParanoid" id="G5ECQ2"/>
<dbReference type="OMA" id="NCAIPCK"/>
<dbReference type="OrthoDB" id="10053709at2759"/>
<dbReference type="PhylomeDB" id="G5ECQ2"/>
<dbReference type="Reactome" id="R-CEL-4086398">
    <property type="pathway name" value="Ca2+ pathway"/>
</dbReference>
<dbReference type="Reactome" id="R-CEL-4608870">
    <property type="pathway name" value="Asymmetric localization of PCP proteins"/>
</dbReference>
<dbReference type="Reactome" id="R-CEL-4641262">
    <property type="pathway name" value="Disassembly of the destruction complex and recruitment of AXIN to the membrane"/>
</dbReference>
<dbReference type="Reactome" id="R-CEL-4641263">
    <property type="pathway name" value="Regulation of FZD by ubiquitination"/>
</dbReference>
<dbReference type="Reactome" id="R-CEL-5140745">
    <property type="pathway name" value="WNT5A-dependent internalization of FZD2, FZD5 and ROR2"/>
</dbReference>
<dbReference type="SignaLink" id="G5ECQ2"/>
<dbReference type="PRO" id="PR:G5ECQ2"/>
<dbReference type="Proteomes" id="UP000001940">
    <property type="component" value="Chromosome V"/>
</dbReference>
<dbReference type="Bgee" id="WBGene00000478">
    <property type="expression patterns" value="Expressed in pharyngeal muscle cell (C elegans) and 3 other cell types or tissues"/>
</dbReference>
<dbReference type="GO" id="GO:0005886">
    <property type="term" value="C:plasma membrane"/>
    <property type="evidence" value="ECO:0000318"/>
    <property type="project" value="GO_Central"/>
</dbReference>
<dbReference type="GO" id="GO:0004930">
    <property type="term" value="F:G protein-coupled receptor activity"/>
    <property type="evidence" value="ECO:0007669"/>
    <property type="project" value="UniProtKB-KW"/>
</dbReference>
<dbReference type="GO" id="GO:0042813">
    <property type="term" value="F:Wnt receptor activity"/>
    <property type="evidence" value="ECO:0000318"/>
    <property type="project" value="GO_Central"/>
</dbReference>
<dbReference type="GO" id="GO:0017147">
    <property type="term" value="F:Wnt-protein binding"/>
    <property type="evidence" value="ECO:0000318"/>
    <property type="project" value="GO_Central"/>
</dbReference>
<dbReference type="GO" id="GO:0060070">
    <property type="term" value="P:canonical Wnt signaling pathway"/>
    <property type="evidence" value="ECO:0000318"/>
    <property type="project" value="GO_Central"/>
</dbReference>
<dbReference type="GO" id="GO:0097475">
    <property type="term" value="P:motor neuron migration"/>
    <property type="evidence" value="ECO:0000316"/>
    <property type="project" value="UniProtKB"/>
</dbReference>
<dbReference type="GO" id="GO:0097402">
    <property type="term" value="P:neuroblast migration"/>
    <property type="evidence" value="ECO:0000316"/>
    <property type="project" value="UniProtKB"/>
</dbReference>
<dbReference type="GO" id="GO:0001764">
    <property type="term" value="P:neuron migration"/>
    <property type="evidence" value="ECO:0000316"/>
    <property type="project" value="UniProtKB"/>
</dbReference>
<dbReference type="GO" id="GO:0035567">
    <property type="term" value="P:non-canonical Wnt signaling pathway"/>
    <property type="evidence" value="ECO:0000318"/>
    <property type="project" value="GO_Central"/>
</dbReference>
<dbReference type="GO" id="GO:1905485">
    <property type="term" value="P:positive regulation of motor neuron migration"/>
    <property type="evidence" value="ECO:0000316"/>
    <property type="project" value="UniProtKB"/>
</dbReference>
<dbReference type="GO" id="GO:1904937">
    <property type="term" value="P:sensory neuron migration"/>
    <property type="evidence" value="ECO:0000316"/>
    <property type="project" value="UniProtKB"/>
</dbReference>
<dbReference type="CDD" id="cd15035">
    <property type="entry name" value="7tmF_FZD5_FZD8-like"/>
    <property type="match status" value="1"/>
</dbReference>
<dbReference type="CDD" id="cd07456">
    <property type="entry name" value="CRD_FZ5_like"/>
    <property type="match status" value="1"/>
</dbReference>
<dbReference type="FunFam" id="1.10.2000.10:FF:000016">
    <property type="entry name" value="Frizzled"/>
    <property type="match status" value="1"/>
</dbReference>
<dbReference type="FunFam" id="1.20.1070.10:FF:000491">
    <property type="entry name" value="Protein CBR-CFZ-2"/>
    <property type="match status" value="1"/>
</dbReference>
<dbReference type="Gene3D" id="1.10.2000.10">
    <property type="entry name" value="Frizzled cysteine-rich domain"/>
    <property type="match status" value="1"/>
</dbReference>
<dbReference type="Gene3D" id="1.20.1070.10">
    <property type="entry name" value="Rhodopsin 7-helix transmembrane proteins"/>
    <property type="match status" value="1"/>
</dbReference>
<dbReference type="InterPro" id="IPR015526">
    <property type="entry name" value="Frizzled/SFRP"/>
</dbReference>
<dbReference type="InterPro" id="IPR000539">
    <property type="entry name" value="Frizzled/Smoothened_7TM"/>
</dbReference>
<dbReference type="InterPro" id="IPR020067">
    <property type="entry name" value="Frizzled_dom"/>
</dbReference>
<dbReference type="InterPro" id="IPR036790">
    <property type="entry name" value="Frizzled_dom_sf"/>
</dbReference>
<dbReference type="InterPro" id="IPR017981">
    <property type="entry name" value="GPCR_2-like_7TM"/>
</dbReference>
<dbReference type="PANTHER" id="PTHR11309">
    <property type="entry name" value="FRIZZLED"/>
    <property type="match status" value="1"/>
</dbReference>
<dbReference type="PANTHER" id="PTHR11309:SF126">
    <property type="entry name" value="FRIZZLED-2"/>
    <property type="match status" value="1"/>
</dbReference>
<dbReference type="Pfam" id="PF01534">
    <property type="entry name" value="Frizzled"/>
    <property type="match status" value="1"/>
</dbReference>
<dbReference type="Pfam" id="PF01392">
    <property type="entry name" value="Fz"/>
    <property type="match status" value="1"/>
</dbReference>
<dbReference type="PRINTS" id="PR00489">
    <property type="entry name" value="FRIZZLED"/>
</dbReference>
<dbReference type="SMART" id="SM00063">
    <property type="entry name" value="FRI"/>
    <property type="match status" value="1"/>
</dbReference>
<dbReference type="SMART" id="SM01330">
    <property type="entry name" value="Frizzled"/>
    <property type="match status" value="1"/>
</dbReference>
<dbReference type="SUPFAM" id="SSF63501">
    <property type="entry name" value="Frizzled cysteine-rich domain"/>
    <property type="match status" value="1"/>
</dbReference>
<dbReference type="PROSITE" id="PS50038">
    <property type="entry name" value="FZ"/>
    <property type="match status" value="1"/>
</dbReference>
<dbReference type="PROSITE" id="PS50261">
    <property type="entry name" value="G_PROTEIN_RECEP_F2_4"/>
    <property type="match status" value="1"/>
</dbReference>
<organism evidence="16">
    <name type="scientific">Caenorhabditis elegans</name>
    <dbReference type="NCBI Taxonomy" id="6239"/>
    <lineage>
        <taxon>Eukaryota</taxon>
        <taxon>Metazoa</taxon>
        <taxon>Ecdysozoa</taxon>
        <taxon>Nematoda</taxon>
        <taxon>Chromadorea</taxon>
        <taxon>Rhabditida</taxon>
        <taxon>Rhabditina</taxon>
        <taxon>Rhabditomorpha</taxon>
        <taxon>Rhabditoidea</taxon>
        <taxon>Rhabditidae</taxon>
        <taxon>Peloderinae</taxon>
        <taxon>Caenorhabditis</taxon>
    </lineage>
</organism>
<protein>
    <recommendedName>
        <fullName evidence="17">Frizzled-2</fullName>
    </recommendedName>
</protein>
<name>FRIZ2_CAEEL</name>
<comment type="function">
    <text evidence="8 9 10 13">Receptor for Wnt proteins (PubMed:19855022, PubMed:20711352). Most frizzled receptors are coupled to the beta-catenin canonical signaling pathway, which leads to the activation of disheveled proteins, inhibition of gsk-3 kinase, nuclear accumulation of beta-catenin and activation of Wnt target genes. A second signaling pathway involving PKC and calcium fluxes has been seen for some family members, but it is not yet clear if it represents a distinct pathway or if it can be integrated in the canonical pathway, as PKC seems to be required for Wnt-mediated inactivation of gsk-3 kinase. Both pathways seem to involve interactions with G-proteins (Probable). Required for the migration and axon formation and guidance of different neuronal cell types including canal-associated neurons (CAN), hermaphrodite-specific neurons (HSN), anterior lateral microtubule neurons (ALM), and the right Q neuroblast (QR) and its descendants (PubMed:16109397). Directs ALM migration through frizzled protein mom-5 and Wnt ligands cwn-1, cwn-2 and egl-20 (PubMed:16109397). May act redundantly with mom-5 to direct CAN migration (PubMed:16109397). Plays a role in the organization of head ganglion cells (PubMed:16109397). Probably by acting as a receptor for Wnt ligand cwn-2, plays a role in the positioning of the nerve ring and may in addition positively regulate the neurite outgrowth of RME GABAergic motor neurons along the anterior-posterior axis of the body (PubMed:19855022, PubMed:20711352).</text>
</comment>
<comment type="subcellular location">
    <subcellularLocation>
        <location evidence="13">Cell membrane</location>
        <topology evidence="4">Multi-pass membrane protein</topology>
    </subcellularLocation>
</comment>
<comment type="tissue specificity">
    <text evidence="8">Expressed in two pairs of head neurons and throughout the pharynx.</text>
</comment>
<comment type="developmental stage">
    <text evidence="8">First expressed at the 100-cell stage of embryogenesis. During embryonic elongation, expressed in anterior, posterior and midbody cells of the embryo and in cellular projections. At hatching, expression is restricted to a few cells in the head and a pair of cells in the tail.</text>
</comment>
<comment type="domain">
    <text evidence="2">Lys-Thr-X-X-X-Trp motif interacts with the PDZ domain of Dvl (Disheveled) family members and is involved in the activation of the Wnt/beta-catenin signaling pathway.</text>
</comment>
<comment type="domain">
    <text evidence="3">The FZ domain is involved in binding with Wnt ligands.</text>
</comment>
<comment type="disruption phenotype">
    <text evidence="8 11">Displaced anterior nerve ring and neuronal cell migration defects including irregular localization of canal-associated neurons (CAN), hermaphrodite-specific neurons (HSN), anterior lateral microtubule neurons (ALM), and the right (but not the left) Q neuroblast (QR) and its descendants (PubMed:16109397, PubMed:9851916). Axon growth and guidance defects whereby some HSN, male CP neurons and CAN extend ectopic axons or branches, and furthermore some HSN irregularly route towards the ventral midline of the body (PubMed:16109397). Disorganized cells of the anterior ganglion which are normally compacted together when they form the head ganglion in wild-type animals (PubMed:16109397). Double knockout with mom-5 or cwn-2 results in enhanced CAN migration defects (PubMed:16109397). Double knockout with Wnt ligands cwn-1, cwn-2, egl-20 or frizzled protein mom-5 rescues the ALM migration defects in the single cfz-2 knockout (PubMed:16109397). Triple knockout with cwn-1 and cwn-2 results in enhanced neuronal cell migratory defects (PubMed:16109397).</text>
</comment>
<comment type="similarity">
    <text evidence="13">Belongs to the G-protein coupled receptor Fz/Smo family.</text>
</comment>
<comment type="sequence caution" evidence="12">
    <conflict type="erroneous gene model prediction">
        <sequence resource="EMBL-CDS" id="BAA84678"/>
    </conflict>
</comment>
<feature type="signal peptide" evidence="4">
    <location>
        <begin position="1"/>
        <end position="17"/>
    </location>
</feature>
<feature type="chain" id="PRO_5007661238" description="Frizzled-2" evidence="13">
    <location>
        <begin position="18"/>
        <end position="578"/>
    </location>
</feature>
<feature type="topological domain" description="Extracellular" evidence="13">
    <location>
        <begin position="18"/>
        <end position="236"/>
    </location>
</feature>
<feature type="transmembrane region" description="Helical; Name=1" evidence="4">
    <location>
        <begin position="237"/>
        <end position="257"/>
    </location>
</feature>
<feature type="topological domain" description="Cytoplasmic" evidence="13">
    <location>
        <begin position="258"/>
        <end position="268"/>
    </location>
</feature>
<feature type="transmembrane region" description="Helical; Name=2" evidence="4">
    <location>
        <begin position="269"/>
        <end position="289"/>
    </location>
</feature>
<feature type="topological domain" description="Extracellular" evidence="13">
    <location>
        <begin position="290"/>
        <end position="312"/>
    </location>
</feature>
<feature type="transmembrane region" description="Helical; Name=3" evidence="4">
    <location>
        <begin position="313"/>
        <end position="333"/>
    </location>
</feature>
<feature type="topological domain" description="Cytoplasmic" evidence="13">
    <location>
        <begin position="334"/>
        <end position="354"/>
    </location>
</feature>
<feature type="transmembrane region" description="Helical; Name=4" evidence="4">
    <location>
        <begin position="355"/>
        <end position="375"/>
    </location>
</feature>
<feature type="topological domain" description="Extracellular" evidence="13">
    <location>
        <begin position="376"/>
        <end position="398"/>
    </location>
</feature>
<feature type="transmembrane region" description="Helical; Name=5" evidence="4">
    <location>
        <begin position="399"/>
        <end position="419"/>
    </location>
</feature>
<feature type="topological domain" description="Cytoplasmic" evidence="13">
    <location>
        <begin position="420"/>
        <end position="449"/>
    </location>
</feature>
<feature type="transmembrane region" description="Helical; Name=6" evidence="4">
    <location>
        <begin position="450"/>
        <end position="470"/>
    </location>
</feature>
<feature type="topological domain" description="Extracellular" evidence="13">
    <location>
        <begin position="471"/>
        <end position="497"/>
    </location>
</feature>
<feature type="transmembrane region" description="Helical; Name=7" evidence="4">
    <location>
        <begin position="498"/>
        <end position="518"/>
    </location>
</feature>
<feature type="topological domain" description="Cytoplasmic" evidence="13">
    <location>
        <begin position="519"/>
        <end position="578"/>
    </location>
</feature>
<feature type="domain" description="FZ" evidence="5">
    <location>
        <begin position="20"/>
        <end position="144"/>
    </location>
</feature>
<feature type="region of interest" description="Disordered" evidence="7">
    <location>
        <begin position="138"/>
        <end position="175"/>
    </location>
</feature>
<feature type="short sequence motif" description="Lys-Thr-X-X-X-Trp motif, mediates interaction with the PDZ domain of Dvl family members" evidence="1">
    <location>
        <begin position="522"/>
        <end position="527"/>
    </location>
</feature>
<feature type="short sequence motif" description="PDZ-binding" evidence="4">
    <location>
        <begin position="556"/>
        <end position="558"/>
    </location>
</feature>
<feature type="compositionally biased region" description="Basic residues" evidence="7">
    <location>
        <begin position="150"/>
        <end position="159"/>
    </location>
</feature>
<feature type="compositionally biased region" description="Low complexity" evidence="7">
    <location>
        <begin position="160"/>
        <end position="169"/>
    </location>
</feature>
<feature type="glycosylation site" description="N-linked (GlcNAc...) asparagine" evidence="6">
    <location>
        <position position="39"/>
    </location>
</feature>
<feature type="glycosylation site" description="N-linked (GlcNAc...) asparagine" evidence="6">
    <location>
        <position position="213"/>
    </location>
</feature>
<feature type="disulfide bond" evidence="5">
    <location>
        <begin position="25"/>
        <end position="86"/>
    </location>
</feature>
<feature type="disulfide bond" evidence="5">
    <location>
        <begin position="33"/>
        <end position="79"/>
    </location>
</feature>
<feature type="disulfide bond" evidence="5">
    <location>
        <begin position="70"/>
        <end position="108"/>
    </location>
</feature>
<feature type="disulfide bond" evidence="5">
    <location>
        <begin position="97"/>
        <end position="141"/>
    </location>
</feature>
<feature type="disulfide bond" evidence="5">
    <location>
        <begin position="101"/>
        <end position="125"/>
    </location>
</feature>
<proteinExistence type="evidence at transcript level"/>
<evidence type="ECO:0000250" key="1">
    <source>
        <dbReference type="UniProtKB" id="Q8AVJ9"/>
    </source>
</evidence>
<evidence type="ECO:0000250" key="2">
    <source>
        <dbReference type="UniProtKB" id="Q9PUK8"/>
    </source>
</evidence>
<evidence type="ECO:0000250" key="3">
    <source>
        <dbReference type="UniProtKB" id="Q9VVX3"/>
    </source>
</evidence>
<evidence type="ECO:0000255" key="4"/>
<evidence type="ECO:0000255" key="5">
    <source>
        <dbReference type="PROSITE-ProRule" id="PRU00090"/>
    </source>
</evidence>
<evidence type="ECO:0000255" key="6">
    <source>
        <dbReference type="PROSITE-ProRule" id="PRU00498"/>
    </source>
</evidence>
<evidence type="ECO:0000256" key="7">
    <source>
        <dbReference type="SAM" id="MobiDB-lite"/>
    </source>
</evidence>
<evidence type="ECO:0000269" key="8">
    <source>
    </source>
</evidence>
<evidence type="ECO:0000269" key="9">
    <source>
    </source>
</evidence>
<evidence type="ECO:0000269" key="10">
    <source>
    </source>
</evidence>
<evidence type="ECO:0000269" key="11">
    <source>
    </source>
</evidence>
<evidence type="ECO:0000303" key="12">
    <source>
    </source>
</evidence>
<evidence type="ECO:0000305" key="13"/>
<evidence type="ECO:0000312" key="14">
    <source>
        <dbReference type="EMBL" id="ABA18181.1"/>
    </source>
</evidence>
<evidence type="ECO:0000312" key="15">
    <source>
        <dbReference type="EMBL" id="BAA84678.1"/>
    </source>
</evidence>
<evidence type="ECO:0000312" key="16">
    <source>
        <dbReference type="Proteomes" id="UP000001940"/>
    </source>
</evidence>
<evidence type="ECO:0000312" key="17">
    <source>
        <dbReference type="WormBase" id="F27E11.3"/>
    </source>
</evidence>
<sequence length="578" mass="65025">MLLRISVLFLLLGSCGALFGKRQKCEQITIPLCKGIGYNMTSFPNSYGHEKQEEAGLEVHQFYPLVEVGCFQHLKFFLCTMYTPICQENYDKPILPCMELCVEARSKCSPIMAKYGFRWPETLSCEALPKMSDQMSTGNICAAPPDTPKKQHKGHHHKNQNQNQNQNHNYSPDGPEVGISKIDNEVIAGPSECQCTCNQPFQFVASEKSKVGNVTNCAYSCHSPALAESHSLVSNWMAFWSITCCVLASFTFLTFLIETDRFQYPERPIFMLAFCQLMVAVGFMIRYFVGHEEIACDSMRIKGADDNSGSLCFVVFLLTYFFGMAASVWWVILSLTWVLSAASKWSPEAISSFSFHFHVVGWCLPAIQTVLVIVFNAIDGDPITGICYVGNTDLQFQRIFVLFPLLVYFIVGVLFLVIGFCNLWSIRNEVQKQHPSLESAHKITQLMSKIGIFSLLYTIPSLLIICVLFYEQNHRSLWEQSQLCSCSPKQTIGDSSLIISLIKTCCMCILGWTSGFWVCSTKTLSSWKNAICCLGSSRSLPKYQPADILYAKSDMSSSQFYNTSLRHNHLYGGIPDKL</sequence>
<gene>
    <name evidence="17" type="primary">cfz-2</name>
    <name evidence="17" type="ORF">F27E11.3</name>
</gene>
<accession>G5ECQ2</accession>
<accession>Q9U8U6</accession>